<organism>
    <name type="scientific">Halobacterium salinarum (strain ATCC 700922 / JCM 11081 / NRC-1)</name>
    <name type="common">Halobacterium halobium</name>
    <dbReference type="NCBI Taxonomy" id="64091"/>
    <lineage>
        <taxon>Archaea</taxon>
        <taxon>Methanobacteriati</taxon>
        <taxon>Methanobacteriota</taxon>
        <taxon>Stenosarchaea group</taxon>
        <taxon>Halobacteria</taxon>
        <taxon>Halobacteriales</taxon>
        <taxon>Halobacteriaceae</taxon>
        <taxon>Halobacterium</taxon>
        <taxon>Halobacterium salinarum NRC-34001</taxon>
    </lineage>
</organism>
<gene>
    <name evidence="2 15" type="primary">gvpA2</name>
    <name evidence="12" type="synonym">c-vac</name>
    <name type="synonym">gvpA</name>
    <name evidence="13" type="synonym">gvpB</name>
    <name evidence="15" type="ordered locus">VNG_6241G</name>
</gene>
<accession>P08959</accession>
<accession>Q9HHT1</accession>
<feature type="initiator methionine" description="Removed" evidence="7">
    <location>
        <position position="1"/>
    </location>
</feature>
<feature type="chain" id="PRO_0000199994" description="Gas vesicle protein A2">
    <location>
        <begin position="2"/>
        <end position="79"/>
    </location>
</feature>
<feature type="region of interest" description="Alpha helix 1" evidence="1">
    <location>
        <begin position="9"/>
        <end position="19"/>
    </location>
</feature>
<feature type="region of interest" description="Beta-strand 1" evidence="1">
    <location>
        <begin position="23"/>
        <end position="31"/>
    </location>
</feature>
<feature type="region of interest" description="Beta turn" evidence="1">
    <location>
        <begin position="32"/>
        <end position="34"/>
    </location>
</feature>
<feature type="region of interest" description="Beta-strand 2" evidence="1">
    <location>
        <begin position="35"/>
        <end position="43"/>
    </location>
</feature>
<feature type="region of interest" description="Alpha helix 2" evidence="1">
    <location>
        <begin position="48"/>
        <end position="67"/>
    </location>
</feature>
<feature type="mutagenesis site" description="No longer assembles into gas vesicles." evidence="10">
    <original>M</original>
    <variation>MPM</variation>
    <location>
        <position position="1"/>
    </location>
</feature>
<reference evidence="16" key="1">
    <citation type="journal article" date="1988" name="Mol. Gen. Genet.">
        <title>Two genes encoding gas vacuole proteins in Halobacterium halobium.</title>
        <authorList>
            <person name="Horne M."/>
            <person name="Englert C."/>
            <person name="Pfeifer F."/>
        </authorList>
    </citation>
    <scope>NUCLEOTIDE SEQUENCE [GENOMIC DNA]</scope>
    <scope>INDUCTION</scope>
    <source>
        <strain>NRC-817</strain>
    </source>
</reference>
<reference evidence="17" key="2">
    <citation type="journal article" date="1989" name="Mol. Gen. Genet.">
        <title>Expression of two gas vacuole protein genes in Halobacterium halobium and other related species.</title>
        <authorList>
            <person name="Horne M."/>
            <person name="Pfeifer F."/>
        </authorList>
    </citation>
    <scope>NUCLEOTIDE SEQUENCE [GENOMIC DNA]</scope>
    <scope>FUNCTION</scope>
    <scope>GAS VESICLE PRODUCTION</scope>
    <scope>INDUCTION</scope>
    <source>
        <strain>NRC-817</strain>
    </source>
</reference>
<reference evidence="18" key="3">
    <citation type="journal article" date="1996" name="J. Bacteriol.">
        <title>Transcript analysis of the c-vac region and differential synthesis of the two regulatory gas vesicle proteins GvpD and GvpE in Halobacterium salinarium PHH4.</title>
        <authorList>
            <person name="Krueger K."/>
            <person name="Pfeifer F."/>
        </authorList>
    </citation>
    <scope>NUCLEOTIDE SEQUENCE [GENOMIC DNA]</scope>
    <scope>INDUCTION</scope>
    <source>
        <strain>PHH1 /PHH4</strain>
    </source>
</reference>
<reference key="4">
    <citation type="journal article" date="1988" name="J. Bacteriol.">
        <title>Evidence for two different gas vesicle proteins and genes in Halobacterium halobium.</title>
        <authorList>
            <person name="Surek B."/>
            <person name="Pillay B."/>
            <person name="Rdest U."/>
            <person name="Beyreuther K."/>
            <person name="Goebel W."/>
        </authorList>
    </citation>
    <scope>PROTEIN SEQUENCE OF 2-37</scope>
    <source>
        <strain>GRA</strain>
        <strain>NRL</strain>
    </source>
</reference>
<reference evidence="15" key="5">
    <citation type="journal article" date="2000" name="Proc. Natl. Acad. Sci. U.S.A.">
        <title>Genome sequence of Halobacterium species NRC-1.</title>
        <authorList>
            <person name="Ng W.V."/>
            <person name="Kennedy S.P."/>
            <person name="Mahairas G.G."/>
            <person name="Berquist B."/>
            <person name="Pan M."/>
            <person name="Shukla H.D."/>
            <person name="Lasky S.R."/>
            <person name="Baliga N.S."/>
            <person name="Thorsson V."/>
            <person name="Sbrogna J."/>
            <person name="Swartzell S."/>
            <person name="Weir D."/>
            <person name="Hall J."/>
            <person name="Dahl T.A."/>
            <person name="Welti R."/>
            <person name="Goo Y.A."/>
            <person name="Leithauser B."/>
            <person name="Keller K."/>
            <person name="Cruz R."/>
            <person name="Danson M.J."/>
            <person name="Hough D.W."/>
            <person name="Maddocks D.G."/>
            <person name="Jablonski P.E."/>
            <person name="Krebs M.P."/>
            <person name="Angevine C.M."/>
            <person name="Dale H."/>
            <person name="Isenbarger T.A."/>
            <person name="Peck R.F."/>
            <person name="Pohlschroder M."/>
            <person name="Spudich J.L."/>
            <person name="Jung K.-H."/>
            <person name="Alam M."/>
            <person name="Freitas T."/>
            <person name="Hou S."/>
            <person name="Daniels C.J."/>
            <person name="Dennis P.P."/>
            <person name="Omer A.D."/>
            <person name="Ebhardt H."/>
            <person name="Lowe T.M."/>
            <person name="Liang P."/>
            <person name="Riley M."/>
            <person name="Hood L."/>
            <person name="DasSarma S."/>
        </authorList>
    </citation>
    <scope>NUCLEOTIDE SEQUENCE [LARGE SCALE GENOMIC DNA]</scope>
    <source>
        <strain>ATCC 700922 / JCM 11081 / NRC-1</strain>
        <plasmid>pNRC200</plasmid>
    </source>
</reference>
<reference key="6">
    <citation type="journal article" date="1997" name="Microbiology">
        <title>Growth competition between Halobacterium salinarium strain PHH1 and mutants affected in gas vesicle synthesis.</title>
        <authorList>
            <person name="Beard S.J."/>
            <person name="Hayes P.K."/>
            <person name="Walsby A.E."/>
        </authorList>
    </citation>
    <scope>FUNCTION IN BUOYANCY</scope>
    <scope>POSSIBLE INDUCTION BY OXYGEN LIMITATION</scope>
    <source>
        <strain>PHH1</strain>
    </source>
</reference>
<reference key="7">
    <citation type="journal article" date="1998" name="Microbiology">
        <title>Structural characteristics of halobacterial gas vesicles.</title>
        <authorList>
            <person name="Offner S."/>
            <person name="Ziese U."/>
            <person name="Wanner G."/>
            <person name="Typke D."/>
            <person name="Pfeifer F."/>
        </authorList>
    </citation>
    <scope>FUNCTION</scope>
    <scope>SUBUNIT</scope>
    <scope>SUBCELLULAR LOCATION</scope>
    <scope>MUTAGENESIS OF MET-1</scope>
    <source>
        <strain>PHH1</strain>
    </source>
</reference>
<reference key="8">
    <citation type="journal article" date="1998" name="J. Mol. Biol.">
        <title>The transcriptional activator GvpE for the halobacterial gas vesicle genes resembles a basic region leucine-zipper regulatory protein.</title>
        <authorList>
            <person name="Krueger K."/>
            <person name="Hermann T."/>
            <person name="Armbruster V."/>
            <person name="Pfeifer F."/>
        </authorList>
    </citation>
    <scope>INDUCTION</scope>
    <source>
        <strain>PHH1</strain>
    </source>
</reference>
<reference key="9">
    <citation type="journal article" date="2002" name="FEMS Microbiol. Lett.">
        <title>The sequence of the major gas vesicle protein, GvpA, influences the width and strength of halobacterial gas vesicles.</title>
        <authorList>
            <person name="Beard S.J."/>
            <person name="Hayes P.K."/>
            <person name="Pfeifer F."/>
            <person name="Walsby A.E."/>
        </authorList>
    </citation>
    <scope>FUNCTION</scope>
    <source>
        <strain>PHH1</strain>
    </source>
</reference>
<reference key="10">
    <citation type="journal article" date="2011" name="J. Proteome Res.">
        <title>New structural proteins of Halobacterium salinarum gas vesicle revealed by comparative proteomics analysis.</title>
        <authorList>
            <person name="Chu L.J."/>
            <person name="Chen M.C."/>
            <person name="Setter J."/>
            <person name="Tsai Y.S."/>
            <person name="Yang H."/>
            <person name="Fang X."/>
            <person name="Ting Y.S."/>
            <person name="Shaffer S.A."/>
            <person name="Taylor G.K."/>
            <person name="von Haller P.D."/>
            <person name="Goodlett D.R."/>
            <person name="Ng W.V."/>
        </authorList>
    </citation>
    <scope>PROTEIN ABUNDANCE</scope>
    <scope>SUBCELLULAR LOCATION</scope>
    <scope>IDENTIFICATION BY MASS SPECTROMETRY</scope>
    <source>
        <strain>ATCC 700922 / JCM 11081 / NRC-1</strain>
    </source>
</reference>
<dbReference type="EMBL" id="X12862">
    <property type="protein sequence ID" value="CAA31339.1"/>
    <property type="molecule type" value="Genomic_DNA"/>
</dbReference>
<dbReference type="EMBL" id="X16527">
    <property type="protein sequence ID" value="CAA34533.1"/>
    <property type="molecule type" value="Genomic_DNA"/>
</dbReference>
<dbReference type="EMBL" id="X94688">
    <property type="protein sequence ID" value="CAA64339.1"/>
    <property type="molecule type" value="Genomic_DNA"/>
</dbReference>
<dbReference type="EMBL" id="AE004438">
    <property type="protein sequence ID" value="AAG20895.1"/>
    <property type="molecule type" value="Genomic_DNA"/>
</dbReference>
<dbReference type="PIR" id="S01422">
    <property type="entry name" value="S01422"/>
</dbReference>
<dbReference type="RefSeq" id="WP_010904108.1">
    <property type="nucleotide sequence ID" value="NZ_BK010831.1"/>
</dbReference>
<dbReference type="SMR" id="P08959"/>
<dbReference type="GeneID" id="89350585"/>
<dbReference type="KEGG" id="hal:VNG_6241G"/>
<dbReference type="PATRIC" id="fig|64091.14.peg.2243"/>
<dbReference type="HOGENOM" id="CLU_169045_1_0_2"/>
<dbReference type="InParanoid" id="P08959"/>
<dbReference type="OrthoDB" id="187177at2157"/>
<dbReference type="PhylomeDB" id="P08959"/>
<dbReference type="Proteomes" id="UP000000554">
    <property type="component" value="Plasmid pNRC200"/>
</dbReference>
<dbReference type="GO" id="GO:0033172">
    <property type="term" value="C:gas vesicle shell"/>
    <property type="evidence" value="ECO:0007669"/>
    <property type="project" value="UniProtKB-UniRule"/>
</dbReference>
<dbReference type="GO" id="GO:0012506">
    <property type="term" value="C:vesicle membrane"/>
    <property type="evidence" value="ECO:0007669"/>
    <property type="project" value="InterPro"/>
</dbReference>
<dbReference type="GO" id="GO:0005198">
    <property type="term" value="F:structural molecule activity"/>
    <property type="evidence" value="ECO:0007669"/>
    <property type="project" value="InterPro"/>
</dbReference>
<dbReference type="HAMAP" id="MF_00576">
    <property type="entry name" value="Gas_vesicle_A"/>
    <property type="match status" value="1"/>
</dbReference>
<dbReference type="InterPro" id="IPR000638">
    <property type="entry name" value="Gas-vesicle_GvpA-like"/>
</dbReference>
<dbReference type="InterPro" id="IPR047870">
    <property type="entry name" value="Gas_vesicle_GvpA"/>
</dbReference>
<dbReference type="InterPro" id="IPR050530">
    <property type="entry name" value="GvpA"/>
</dbReference>
<dbReference type="InterPro" id="IPR018493">
    <property type="entry name" value="GvpA-like_CS"/>
</dbReference>
<dbReference type="NCBIfam" id="NF046092">
    <property type="entry name" value="halo_gas_GvpA"/>
    <property type="match status" value="1"/>
</dbReference>
<dbReference type="NCBIfam" id="NF006874">
    <property type="entry name" value="PRK09371.1"/>
    <property type="match status" value="1"/>
</dbReference>
<dbReference type="PANTHER" id="PTHR35344:SF4">
    <property type="entry name" value="GAS VESICLE PROTEIN A1"/>
    <property type="match status" value="1"/>
</dbReference>
<dbReference type="PANTHER" id="PTHR35344">
    <property type="entry name" value="GAS VESICLE STRUCTURAL PROTEIN 2-RELATED"/>
    <property type="match status" value="1"/>
</dbReference>
<dbReference type="Pfam" id="PF00741">
    <property type="entry name" value="Gas_vesicle"/>
    <property type="match status" value="1"/>
</dbReference>
<dbReference type="PROSITE" id="PS00234">
    <property type="entry name" value="GAS_VESICLE_A_1"/>
    <property type="match status" value="1"/>
</dbReference>
<dbReference type="PROSITE" id="PS00669">
    <property type="entry name" value="GAS_VESICLE_A_2"/>
    <property type="match status" value="1"/>
</dbReference>
<geneLocation type="plasmid">
    <name>pNRC200</name>
</geneLocation>
<protein>
    <recommendedName>
        <fullName evidence="2">Gas vesicle protein A2</fullName>
        <shortName evidence="13">GVP-B</shortName>
        <shortName evidence="2">GvpA2</shortName>
        <shortName evidence="14">cGvpA</shortName>
    </recommendedName>
</protein>
<evidence type="ECO:0000250" key="1">
    <source>
        <dbReference type="UniProtKB" id="P08958"/>
    </source>
</evidence>
<evidence type="ECO:0000255" key="2">
    <source>
        <dbReference type="HAMAP-Rule" id="MF_00576"/>
    </source>
</evidence>
<evidence type="ECO:0000269" key="3">
    <source>
    </source>
</evidence>
<evidence type="ECO:0000269" key="4">
    <source>
    </source>
</evidence>
<evidence type="ECO:0000269" key="5">
    <source>
    </source>
</evidence>
<evidence type="ECO:0000269" key="6">
    <source>
    </source>
</evidence>
<evidence type="ECO:0000269" key="7">
    <source>
    </source>
</evidence>
<evidence type="ECO:0000269" key="8">
    <source>
    </source>
</evidence>
<evidence type="ECO:0000269" key="9">
    <source>
    </source>
</evidence>
<evidence type="ECO:0000269" key="10">
    <source>
    </source>
</evidence>
<evidence type="ECO:0000269" key="11">
    <source>
    </source>
</evidence>
<evidence type="ECO:0000303" key="12">
    <source>
    </source>
</evidence>
<evidence type="ECO:0000303" key="13">
    <source>
    </source>
</evidence>
<evidence type="ECO:0000303" key="14">
    <source>
    </source>
</evidence>
<evidence type="ECO:0000312" key="15">
    <source>
        <dbReference type="EMBL" id="AAG20895.1"/>
    </source>
</evidence>
<evidence type="ECO:0000312" key="16">
    <source>
        <dbReference type="EMBL" id="CAA31339.1"/>
    </source>
</evidence>
<evidence type="ECO:0000312" key="17">
    <source>
        <dbReference type="EMBL" id="CAA34533.1"/>
    </source>
</evidence>
<evidence type="ECO:0000312" key="18">
    <source>
        <dbReference type="EMBL" id="CAA64339.1"/>
    </source>
</evidence>
<sequence length="79" mass="8372">MAQPDSSSLAEVLDRVLDKGVVVDVWARISLVGIEILTVEARVVAASVDTFLHYAEEIAKIEQAELTAGAEAPEPAPEA</sequence>
<name>GVPA2_HALSA</name>
<keyword id="KW-0903">Direct protein sequencing</keyword>
<keyword id="KW-0304">Gas vesicle</keyword>
<keyword id="KW-0614">Plasmid</keyword>
<keyword id="KW-1185">Reference proteome</keyword>
<comment type="function">
    <text evidence="3 4 5 8">Gas vesicles are hollow, gas filled proteinaceous nanostructures found in several microbial planktonic microorganisms. They allow positioning of halobacteria at the optimal depth for growth in the poorly aerated shallow brine pools of their habitat (PubMed:33711860). GvpA forms the gas vesicle shell (PubMed:12167531, PubMed:2586485). This protein can replace the p-gvpA gene in the p-vac locus and increases the critical collapse pressure (CCP) of hybrid gas vesicles from 0.66 MPa to 0.90 MPa (PubMed:12167531). In stationary phase gas vesicles about 30 times more GvpA1 is found than GvpA2 (PubMed:21158390).</text>
</comment>
<comment type="function">
    <text evidence="10">Expression of 2 c-vac DNA fragments containing 2 divergently transcribed regions (gvpE-gvpF-gvpG-gvpH-gvpI-gvpJ-gvpK-gvpL-gvpM and gvpA-gvpC-gvpN-gvpO) allows H.volcanii to produce gas vesicles. All site-directed mutagenesis is tested in H.volcanii.</text>
</comment>
<comment type="subunit">
    <text evidence="2">The gas vesicle shell is 2 nm thick and consists of a single layer of this protein. It forms helical ribs nearly perpendicular to the long axis of the vesicle.</text>
</comment>
<comment type="subcellular location">
    <subcellularLocation>
        <location evidence="2 4 10">Gas vesicle shell</location>
    </subcellularLocation>
</comment>
<comment type="induction">
    <text evidence="5 6 8 9 11">Transcription is activated by c-GvpE (PubMed:9642059). Poorly expressed at mid-log phase (PubMed:3185512). In 'wild-type' cells (probably NRC-1/NRL) gas vesicles are seen at all stages of growth; in standing cultures, cells float. In this study gvpA2 (c-vac) was not detectably transcribed, presumably most to all gas vesicles are derived from the p-vac locus. If the p-vac locus is deleted gvpA2 is transcribed in late log phase and rises in stationary phase; gas vesicles appear during early stationary phase, but fewer vesicles are detected (PubMed:2586485). In PHH4 (a deletion of the p-vac locus) detected starting in late exponential phase, expressed during stationary phase (at protein level). Not transcribed in exponential phase, highly transcribed from stationary to mid-stationary phase. Small amounts of longer transcripts that probably include gvpC-gvpN-gvpO and further downstream are also seen (PubMed:8763925). Gas vesicles appear earlier when grown in static culture, possibly due to O(2)-limitation (PubMed:33711860).</text>
</comment>
<comment type="miscellaneous">
    <text evidence="5 9 10">Encoded in a 14-gene locus called c-vac which produces cylindrical gas vesicles only in the stationary growth phase.</text>
</comment>
<comment type="miscellaneous">
    <text evidence="6 9 10">This 'chromosomal' gene (c-vac, gvpA2) is only expressed during the stationary phase of growth, while the plasmid encoded gene (p-vac, gvpA1) is transcribed constitutively throughout the growth cycle.</text>
</comment>
<comment type="miscellaneous">
    <text evidence="9">Strain PHH4 is a derivative of PHH1 which does not have the p-vac locus.</text>
</comment>
<comment type="similarity">
    <text evidence="2">Belongs to the gas vesicle GvpA family.</text>
</comment>
<proteinExistence type="evidence at protein level"/>